<sequence length="609" mass="68350">MKWVVSILLIFLLNSTESRTMHSNAYGIASALDSFQCSPEMNLVDLATIFFAQFVQEATYKEVSKMVKDVLTVTEKSTGSEQPTGCSENRLSAFLEEICHEEEIPEKYGLSGCCSQNEEERHNCLLARKKDSPASIPPFQVPEPVTSCKAYEENREMFLNRYLYEIARRHPFLYSSTALYLASHYDKIISACCKSENAVECFQSKAATITKELRETSLLNQHVCAVIRNFGPRTLQAITVTTLSQRYSKANFTEIQKLVLDVAHAHEECCRGNVEECVQDGEKLISYVCSQEDILSSSIVECCKLPTVELAQCIIHAENDDKPEGLSPNLNRLLGERDFNQFSSKEKDLFMARFTYEYSRRHTKLAVPVILRVAKGYQEFLEKCSQSENPLECQDKGEEELQKYIQEGQALAKRSCGLFQKLGDYYLQNAFLVAYTKKAPQLTPPELIALTRKMATAAATCCQLSEDKQLACGEQVAGLIIGQLCIRHEESPINPGVGQCCTSSYANRRPCFSSLVVDETYVPPPFSDDKFIFHKDLCQAQGVALQTMKQQFLINLVKQKPQITEEQLEAVIADFSGLLEKCCQGQGQEVCFSEEGPQLISKTRAALGV</sequence>
<dbReference type="EMBL" id="U28947">
    <property type="protein sequence ID" value="AAA69559.1"/>
    <property type="molecule type" value="mRNA"/>
</dbReference>
<dbReference type="RefSeq" id="NP_001075421.1">
    <property type="nucleotide sequence ID" value="NM_001081952.1"/>
</dbReference>
<dbReference type="SMR" id="P49066"/>
<dbReference type="FunCoup" id="P49066">
    <property type="interactions" value="118"/>
</dbReference>
<dbReference type="STRING" id="9796.ENSECAP00000020985"/>
<dbReference type="GlyCosmos" id="P49066">
    <property type="glycosylation" value="1 site, No reported glycans"/>
</dbReference>
<dbReference type="PaxDb" id="9796-ENSECAP00000020985"/>
<dbReference type="Ensembl" id="ENSECAT00000025232.2">
    <property type="protein sequence ID" value="ENSECAP00000020985.2"/>
    <property type="gene ID" value="ENSECAG00000023229.3"/>
</dbReference>
<dbReference type="GeneID" id="100034185"/>
<dbReference type="KEGG" id="ecb:100034185"/>
<dbReference type="CTD" id="174"/>
<dbReference type="VGNC" id="VGNC:51133">
    <property type="gene designation" value="AFP"/>
</dbReference>
<dbReference type="GeneTree" id="ENSGT00390000000113"/>
<dbReference type="HOGENOM" id="CLU_030161_1_0_1"/>
<dbReference type="InParanoid" id="P49066"/>
<dbReference type="OMA" id="HEECCRG"/>
<dbReference type="OrthoDB" id="9875082at2759"/>
<dbReference type="Proteomes" id="UP000002281">
    <property type="component" value="Chromosome 3"/>
</dbReference>
<dbReference type="Bgee" id="ENSECAG00000023229">
    <property type="expression patterns" value="Expressed in synovial membrane of synovial joint and 3 other cell types or tissues"/>
</dbReference>
<dbReference type="GO" id="GO:0005737">
    <property type="term" value="C:cytoplasm"/>
    <property type="evidence" value="ECO:0000318"/>
    <property type="project" value="GO_Central"/>
</dbReference>
<dbReference type="GO" id="GO:0005615">
    <property type="term" value="C:extracellular space"/>
    <property type="evidence" value="ECO:0007669"/>
    <property type="project" value="InterPro"/>
</dbReference>
<dbReference type="GO" id="GO:0046872">
    <property type="term" value="F:metal ion binding"/>
    <property type="evidence" value="ECO:0007669"/>
    <property type="project" value="UniProtKB-KW"/>
</dbReference>
<dbReference type="CDD" id="cd00015">
    <property type="entry name" value="ALBUMIN"/>
    <property type="match status" value="3"/>
</dbReference>
<dbReference type="FunFam" id="1.10.246.10:FF:000001">
    <property type="entry name" value="Serum albumin"/>
    <property type="match status" value="2"/>
</dbReference>
<dbReference type="FunFam" id="1.10.246.10:FF:000002">
    <property type="entry name" value="Serum albumin"/>
    <property type="match status" value="2"/>
</dbReference>
<dbReference type="FunFam" id="1.10.246.10:FF:000004">
    <property type="entry name" value="Serum albumin"/>
    <property type="match status" value="1"/>
</dbReference>
<dbReference type="Gene3D" id="1.10.246.10">
    <property type="match status" value="6"/>
</dbReference>
<dbReference type="InterPro" id="IPR000264">
    <property type="entry name" value="ALB/AFP/VDB"/>
</dbReference>
<dbReference type="InterPro" id="IPR020858">
    <property type="entry name" value="Serum_albumin-like"/>
</dbReference>
<dbReference type="InterPro" id="IPR021177">
    <property type="entry name" value="Serum_albumin/AFP/Afamin"/>
</dbReference>
<dbReference type="InterPro" id="IPR020857">
    <property type="entry name" value="Serum_albumin_CS"/>
</dbReference>
<dbReference type="InterPro" id="IPR014760">
    <property type="entry name" value="Serum_albumin_N"/>
</dbReference>
<dbReference type="PANTHER" id="PTHR11385:SF7">
    <property type="entry name" value="ALPHA-FETOPROTEIN"/>
    <property type="match status" value="1"/>
</dbReference>
<dbReference type="PANTHER" id="PTHR11385">
    <property type="entry name" value="SERUM ALBUMIN-RELATED"/>
    <property type="match status" value="1"/>
</dbReference>
<dbReference type="Pfam" id="PF00273">
    <property type="entry name" value="Serum_albumin"/>
    <property type="match status" value="3"/>
</dbReference>
<dbReference type="PIRSF" id="PIRSF002520">
    <property type="entry name" value="Serum_albumin_subgroup"/>
    <property type="match status" value="1"/>
</dbReference>
<dbReference type="PRINTS" id="PR00803">
    <property type="entry name" value="AFETOPROTEIN"/>
</dbReference>
<dbReference type="PRINTS" id="PR00802">
    <property type="entry name" value="SERUMALBUMIN"/>
</dbReference>
<dbReference type="SMART" id="SM00103">
    <property type="entry name" value="ALBUMIN"/>
    <property type="match status" value="3"/>
</dbReference>
<dbReference type="SUPFAM" id="SSF48552">
    <property type="entry name" value="Serum albumin-like"/>
    <property type="match status" value="3"/>
</dbReference>
<dbReference type="PROSITE" id="PS00212">
    <property type="entry name" value="ALBUMIN_1"/>
    <property type="match status" value="2"/>
</dbReference>
<dbReference type="PROSITE" id="PS51438">
    <property type="entry name" value="ALBUMIN_2"/>
    <property type="match status" value="3"/>
</dbReference>
<proteinExistence type="evidence at transcript level"/>
<gene>
    <name type="primary">AFP</name>
</gene>
<organism>
    <name type="scientific">Equus caballus</name>
    <name type="common">Horse</name>
    <dbReference type="NCBI Taxonomy" id="9796"/>
    <lineage>
        <taxon>Eukaryota</taxon>
        <taxon>Metazoa</taxon>
        <taxon>Chordata</taxon>
        <taxon>Craniata</taxon>
        <taxon>Vertebrata</taxon>
        <taxon>Euteleostomi</taxon>
        <taxon>Mammalia</taxon>
        <taxon>Eutheria</taxon>
        <taxon>Laurasiatheria</taxon>
        <taxon>Perissodactyla</taxon>
        <taxon>Equidae</taxon>
        <taxon>Equus</taxon>
    </lineage>
</organism>
<keyword id="KW-0186">Copper</keyword>
<keyword id="KW-1015">Disulfide bond</keyword>
<keyword id="KW-0325">Glycoprotein</keyword>
<keyword id="KW-0479">Metal-binding</keyword>
<keyword id="KW-0533">Nickel</keyword>
<keyword id="KW-0597">Phosphoprotein</keyword>
<keyword id="KW-1185">Reference proteome</keyword>
<keyword id="KW-0677">Repeat</keyword>
<keyword id="KW-0964">Secreted</keyword>
<keyword id="KW-0732">Signal</keyword>
<keyword id="KW-0765">Sulfation</keyword>
<accession>P49066</accession>
<evidence type="ECO:0000250" key="1"/>
<evidence type="ECO:0000250" key="2">
    <source>
        <dbReference type="UniProtKB" id="P02771"/>
    </source>
</evidence>
<evidence type="ECO:0000255" key="3"/>
<evidence type="ECO:0000255" key="4">
    <source>
        <dbReference type="PROSITE-ProRule" id="PRU00769"/>
    </source>
</evidence>
<comment type="function">
    <text evidence="1">Binds copper, nickel, and fatty acids as well as, and bilirubin less well than, serum albumin.</text>
</comment>
<comment type="subunit">
    <text evidence="1">Dimeric and trimeric forms have been found in addition to the monomeric form.</text>
</comment>
<comment type="subcellular location">
    <subcellularLocation>
        <location>Secreted</location>
    </subcellularLocation>
</comment>
<comment type="tissue specificity">
    <text>Plasma.</text>
</comment>
<comment type="PTM">
    <text evidence="1">Sulfated.</text>
</comment>
<comment type="similarity">
    <text evidence="4">Belongs to the ALB/AFP/VDB family.</text>
</comment>
<name>FETA_HORSE</name>
<protein>
    <recommendedName>
        <fullName>Alpha-fetoprotein</fullName>
    </recommendedName>
    <alternativeName>
        <fullName>Alpha-1-fetoprotein</fullName>
    </alternativeName>
    <alternativeName>
        <fullName>Alpha-fetoglobulin</fullName>
    </alternativeName>
</protein>
<reference key="1">
    <citation type="submission" date="1995-06" db="EMBL/GenBank/DDBJ databases">
        <title>Molecular cloning and sequencing of equine AFP: synthesis of AFP by conceptus membranes and presence in fetal fluids.</title>
        <authorList>
            <person name="McDowell K.J."/>
            <person name="Adams M.H."/>
            <person name="Baker C.B."/>
        </authorList>
    </citation>
    <scope>NUCLEOTIDE SEQUENCE [MRNA]</scope>
    <source>
        <tissue>Conceptus membrane</tissue>
    </source>
</reference>
<feature type="signal peptide" evidence="1">
    <location>
        <begin position="1"/>
        <end position="18"/>
    </location>
</feature>
<feature type="chain" id="PRO_0000001096" description="Alpha-fetoprotein">
    <location>
        <begin position="19"/>
        <end position="609"/>
    </location>
</feature>
<feature type="domain" description="Albumin 1" evidence="4">
    <location>
        <begin position="19"/>
        <end position="210"/>
    </location>
</feature>
<feature type="domain" description="Albumin 2" evidence="4">
    <location>
        <begin position="211"/>
        <end position="402"/>
    </location>
</feature>
<feature type="domain" description="Albumin 3" evidence="4">
    <location>
        <begin position="403"/>
        <end position="601"/>
    </location>
</feature>
<feature type="binding site" evidence="1">
    <location>
        <position position="22"/>
    </location>
    <ligand>
        <name>Cu(2+)</name>
        <dbReference type="ChEBI" id="CHEBI:29036"/>
    </ligand>
</feature>
<feature type="modified residue" description="Phosphoserine" evidence="2">
    <location>
        <position position="111"/>
    </location>
</feature>
<feature type="modified residue" description="Phosphoserine" evidence="2">
    <location>
        <position position="115"/>
    </location>
</feature>
<feature type="modified residue" description="Phosphoserine" evidence="2">
    <location>
        <position position="344"/>
    </location>
</feature>
<feature type="glycosylation site" description="N-linked (GlcNAc...) asparagine" evidence="3">
    <location>
        <position position="251"/>
    </location>
</feature>
<feature type="disulfide bond" evidence="4">
    <location>
        <begin position="99"/>
        <end position="114"/>
    </location>
</feature>
<feature type="disulfide bond" evidence="4">
    <location>
        <begin position="113"/>
        <end position="124"/>
    </location>
</feature>
<feature type="disulfide bond" evidence="4">
    <location>
        <begin position="148"/>
        <end position="193"/>
    </location>
</feature>
<feature type="disulfide bond" evidence="4">
    <location>
        <begin position="192"/>
        <end position="201"/>
    </location>
</feature>
<feature type="disulfide bond" evidence="4">
    <location>
        <begin position="224"/>
        <end position="270"/>
    </location>
</feature>
<feature type="disulfide bond" evidence="4">
    <location>
        <begin position="269"/>
        <end position="277"/>
    </location>
</feature>
<feature type="disulfide bond" evidence="4">
    <location>
        <begin position="289"/>
        <end position="303"/>
    </location>
</feature>
<feature type="disulfide bond" evidence="4">
    <location>
        <begin position="302"/>
        <end position="313"/>
    </location>
</feature>
<feature type="disulfide bond" evidence="4">
    <location>
        <begin position="384"/>
        <end position="393"/>
    </location>
</feature>
<feature type="disulfide bond" evidence="4">
    <location>
        <begin position="416"/>
        <end position="462"/>
    </location>
</feature>
<feature type="disulfide bond" evidence="4">
    <location>
        <begin position="461"/>
        <end position="472"/>
    </location>
</feature>
<feature type="disulfide bond" evidence="4">
    <location>
        <begin position="485"/>
        <end position="501"/>
    </location>
</feature>
<feature type="disulfide bond" evidence="4">
    <location>
        <begin position="500"/>
        <end position="511"/>
    </location>
</feature>
<feature type="disulfide bond" evidence="4">
    <location>
        <begin position="538"/>
        <end position="583"/>
    </location>
</feature>
<feature type="disulfide bond" evidence="4">
    <location>
        <begin position="582"/>
        <end position="591"/>
    </location>
</feature>